<proteinExistence type="inferred from homology"/>
<gene>
    <name type="primary">glcB</name>
    <name type="ordered locus">SAV2538</name>
</gene>
<reference key="1">
    <citation type="journal article" date="2001" name="Lancet">
        <title>Whole genome sequencing of meticillin-resistant Staphylococcus aureus.</title>
        <authorList>
            <person name="Kuroda M."/>
            <person name="Ohta T."/>
            <person name="Uchiyama I."/>
            <person name="Baba T."/>
            <person name="Yuzawa H."/>
            <person name="Kobayashi I."/>
            <person name="Cui L."/>
            <person name="Oguchi A."/>
            <person name="Aoki K."/>
            <person name="Nagai Y."/>
            <person name="Lian J.-Q."/>
            <person name="Ito T."/>
            <person name="Kanamori M."/>
            <person name="Matsumaru H."/>
            <person name="Maruyama A."/>
            <person name="Murakami H."/>
            <person name="Hosoyama A."/>
            <person name="Mizutani-Ui Y."/>
            <person name="Takahashi N.K."/>
            <person name="Sawano T."/>
            <person name="Inoue R."/>
            <person name="Kaito C."/>
            <person name="Sekimizu K."/>
            <person name="Hirakawa H."/>
            <person name="Kuhara S."/>
            <person name="Goto S."/>
            <person name="Yabuzaki J."/>
            <person name="Kanehisa M."/>
            <person name="Yamashita A."/>
            <person name="Oshima K."/>
            <person name="Furuya K."/>
            <person name="Yoshino C."/>
            <person name="Shiba T."/>
            <person name="Hattori M."/>
            <person name="Ogasawara N."/>
            <person name="Hayashi H."/>
            <person name="Hiramatsu K."/>
        </authorList>
    </citation>
    <scope>NUCLEOTIDE SEQUENCE [LARGE SCALE GENOMIC DNA]</scope>
    <source>
        <strain>Mu50 / ATCC 700699</strain>
    </source>
</reference>
<evidence type="ECO:0000250" key="1"/>
<evidence type="ECO:0000255" key="2">
    <source>
        <dbReference type="PROSITE-ProRule" id="PRU00416"/>
    </source>
</evidence>
<evidence type="ECO:0000255" key="3">
    <source>
        <dbReference type="PROSITE-ProRule" id="PRU00421"/>
    </source>
</evidence>
<evidence type="ECO:0000255" key="4">
    <source>
        <dbReference type="PROSITE-ProRule" id="PRU00426"/>
    </source>
</evidence>
<comment type="function">
    <text evidence="1">The phosphoenolpyruvate-dependent sugar phosphotransferase system (sugar PTS), a major carbohydrate active -transport system, catalyzes the phosphorylation of incoming sugar substrates concomitantly with their translocation across the cell membrane. This system is involved in alpha- and beta-glucoside transport (By similarity).</text>
</comment>
<comment type="subcellular location">
    <subcellularLocation>
        <location evidence="4">Cell membrane</location>
        <topology evidence="4">Multi-pass membrane protein</topology>
    </subcellularLocation>
</comment>
<comment type="domain">
    <text>The EIIC domain forms the PTS system translocation channel and contains the specific substrate-binding site.</text>
</comment>
<comment type="domain">
    <text>The EIIB domain is phosphorylated by phospho-EIIA on a cysteinyl or histidyl residue, depending on the transported sugar. Then, it transfers the phosphoryl group to the sugar substrate concomitantly with the sugar uptake processed by the EIIC domain.</text>
</comment>
<comment type="domain">
    <text>The EIIA domain is phosphorylated by phospho-HPr on a histidyl residue. Then, it transfers the phosphoryl group to the EIIB domain.</text>
</comment>
<organism>
    <name type="scientific">Staphylococcus aureus (strain Mu50 / ATCC 700699)</name>
    <dbReference type="NCBI Taxonomy" id="158878"/>
    <lineage>
        <taxon>Bacteria</taxon>
        <taxon>Bacillati</taxon>
        <taxon>Bacillota</taxon>
        <taxon>Bacilli</taxon>
        <taxon>Bacillales</taxon>
        <taxon>Staphylococcaceae</taxon>
        <taxon>Staphylococcus</taxon>
    </lineage>
</organism>
<dbReference type="EC" id="2.7.1.-"/>
<dbReference type="EMBL" id="BA000017">
    <property type="protein sequence ID" value="BAB58700.1"/>
    <property type="molecule type" value="Genomic_DNA"/>
</dbReference>
<dbReference type="SMR" id="Q99R97"/>
<dbReference type="KEGG" id="sav:SAV2538"/>
<dbReference type="HOGENOM" id="CLU_012312_1_1_9"/>
<dbReference type="PhylomeDB" id="Q99R97"/>
<dbReference type="Proteomes" id="UP000002481">
    <property type="component" value="Chromosome"/>
</dbReference>
<dbReference type="GO" id="GO:0005886">
    <property type="term" value="C:plasma membrane"/>
    <property type="evidence" value="ECO:0007669"/>
    <property type="project" value="UniProtKB-SubCell"/>
</dbReference>
<dbReference type="GO" id="GO:0055056">
    <property type="term" value="F:D-glucose transmembrane transporter activity"/>
    <property type="evidence" value="ECO:0007669"/>
    <property type="project" value="InterPro"/>
</dbReference>
<dbReference type="GO" id="GO:0016301">
    <property type="term" value="F:kinase activity"/>
    <property type="evidence" value="ECO:0007669"/>
    <property type="project" value="UniProtKB-KW"/>
</dbReference>
<dbReference type="GO" id="GO:0008982">
    <property type="term" value="F:protein-N(PI)-phosphohistidine-sugar phosphotransferase activity"/>
    <property type="evidence" value="ECO:0007669"/>
    <property type="project" value="InterPro"/>
</dbReference>
<dbReference type="GO" id="GO:0090563">
    <property type="term" value="F:protein-phosphocysteine-sugar phosphotransferase activity"/>
    <property type="evidence" value="ECO:0007669"/>
    <property type="project" value="TreeGrafter"/>
</dbReference>
<dbReference type="GO" id="GO:1904659">
    <property type="term" value="P:D-glucose transmembrane transport"/>
    <property type="evidence" value="ECO:0007669"/>
    <property type="project" value="InterPro"/>
</dbReference>
<dbReference type="GO" id="GO:0009401">
    <property type="term" value="P:phosphoenolpyruvate-dependent sugar phosphotransferase system"/>
    <property type="evidence" value="ECO:0007669"/>
    <property type="project" value="UniProtKB-KW"/>
</dbReference>
<dbReference type="CDD" id="cd00212">
    <property type="entry name" value="PTS_IIB_glc"/>
    <property type="match status" value="1"/>
</dbReference>
<dbReference type="FunFam" id="2.70.70.10:FF:000001">
    <property type="entry name" value="PTS system glucose-specific IIA component"/>
    <property type="match status" value="1"/>
</dbReference>
<dbReference type="FunFam" id="3.30.1360.60:FF:000001">
    <property type="entry name" value="PTS system glucose-specific IIBC component PtsG"/>
    <property type="match status" value="1"/>
</dbReference>
<dbReference type="Gene3D" id="2.70.70.10">
    <property type="entry name" value="Glucose Permease (Domain IIA)"/>
    <property type="match status" value="1"/>
</dbReference>
<dbReference type="Gene3D" id="3.30.1360.60">
    <property type="entry name" value="Glucose permease domain IIB"/>
    <property type="match status" value="1"/>
</dbReference>
<dbReference type="InterPro" id="IPR011055">
    <property type="entry name" value="Dup_hybrid_motif"/>
</dbReference>
<dbReference type="InterPro" id="IPR036878">
    <property type="entry name" value="Glu_permease_IIB"/>
</dbReference>
<dbReference type="InterPro" id="IPR018113">
    <property type="entry name" value="PTrfase_EIIB_Cys"/>
</dbReference>
<dbReference type="InterPro" id="IPR001127">
    <property type="entry name" value="PTS_EIIA_1_perm"/>
</dbReference>
<dbReference type="InterPro" id="IPR003352">
    <property type="entry name" value="PTS_EIIC"/>
</dbReference>
<dbReference type="InterPro" id="IPR013013">
    <property type="entry name" value="PTS_EIIC_1"/>
</dbReference>
<dbReference type="InterPro" id="IPR050429">
    <property type="entry name" value="PTS_Glucose_EIICBA"/>
</dbReference>
<dbReference type="InterPro" id="IPR001996">
    <property type="entry name" value="PTS_IIB_1"/>
</dbReference>
<dbReference type="InterPro" id="IPR011299">
    <property type="entry name" value="PTS_IIBC_glc"/>
</dbReference>
<dbReference type="NCBIfam" id="TIGR00826">
    <property type="entry name" value="EIIB_glc"/>
    <property type="match status" value="1"/>
</dbReference>
<dbReference type="NCBIfam" id="TIGR00830">
    <property type="entry name" value="PTBA"/>
    <property type="match status" value="1"/>
</dbReference>
<dbReference type="NCBIfam" id="TIGR02002">
    <property type="entry name" value="PTS-II-BC-glcB"/>
    <property type="match status" value="1"/>
</dbReference>
<dbReference type="PANTHER" id="PTHR30009">
    <property type="entry name" value="CYTOCHROME C-TYPE SYNTHESIS PROTEIN AND PTS TRANSMEMBRANE COMPONENT"/>
    <property type="match status" value="1"/>
</dbReference>
<dbReference type="PANTHER" id="PTHR30009:SF20">
    <property type="entry name" value="PTS SYSTEM GLUCOSE-SPECIFIC EIICB COMPONENT-RELATED"/>
    <property type="match status" value="1"/>
</dbReference>
<dbReference type="Pfam" id="PF00358">
    <property type="entry name" value="PTS_EIIA_1"/>
    <property type="match status" value="1"/>
</dbReference>
<dbReference type="Pfam" id="PF00367">
    <property type="entry name" value="PTS_EIIB"/>
    <property type="match status" value="1"/>
</dbReference>
<dbReference type="Pfam" id="PF02378">
    <property type="entry name" value="PTS_EIIC"/>
    <property type="match status" value="1"/>
</dbReference>
<dbReference type="SUPFAM" id="SSF51261">
    <property type="entry name" value="Duplicated hybrid motif"/>
    <property type="match status" value="1"/>
</dbReference>
<dbReference type="SUPFAM" id="SSF55604">
    <property type="entry name" value="Glucose permease domain IIB"/>
    <property type="match status" value="1"/>
</dbReference>
<dbReference type="PROSITE" id="PS51093">
    <property type="entry name" value="PTS_EIIA_TYPE_1"/>
    <property type="match status" value="1"/>
</dbReference>
<dbReference type="PROSITE" id="PS00371">
    <property type="entry name" value="PTS_EIIA_TYPE_1_HIS"/>
    <property type="match status" value="1"/>
</dbReference>
<dbReference type="PROSITE" id="PS51098">
    <property type="entry name" value="PTS_EIIB_TYPE_1"/>
    <property type="match status" value="1"/>
</dbReference>
<dbReference type="PROSITE" id="PS01035">
    <property type="entry name" value="PTS_EIIB_TYPE_1_CYS"/>
    <property type="match status" value="1"/>
</dbReference>
<dbReference type="PROSITE" id="PS51103">
    <property type="entry name" value="PTS_EIIC_TYPE_1"/>
    <property type="match status" value="1"/>
</dbReference>
<accession>Q99R97</accession>
<name>PTU3C_STAAM</name>
<feature type="chain" id="PRO_0000351413" description="PTS system glucoside-specific EIICBA component">
    <location>
        <begin position="1"/>
        <end position="688"/>
    </location>
</feature>
<feature type="transmembrane region" description="Helical" evidence="4">
    <location>
        <begin position="12"/>
        <end position="32"/>
    </location>
</feature>
<feature type="transmembrane region" description="Helical" evidence="4">
    <location>
        <begin position="81"/>
        <end position="101"/>
    </location>
</feature>
<feature type="transmembrane region" description="Helical" evidence="4">
    <location>
        <begin position="137"/>
        <end position="157"/>
    </location>
</feature>
<feature type="transmembrane region" description="Helical" evidence="4">
    <location>
        <begin position="182"/>
        <end position="202"/>
    </location>
</feature>
<feature type="transmembrane region" description="Helical" evidence="4">
    <location>
        <begin position="223"/>
        <end position="243"/>
    </location>
</feature>
<feature type="transmembrane region" description="Helical" evidence="4">
    <location>
        <begin position="284"/>
        <end position="304"/>
    </location>
</feature>
<feature type="transmembrane region" description="Helical" evidence="4">
    <location>
        <begin position="315"/>
        <end position="335"/>
    </location>
</feature>
<feature type="transmembrane region" description="Helical" evidence="4">
    <location>
        <begin position="340"/>
        <end position="360"/>
    </location>
</feature>
<feature type="transmembrane region" description="Helical" evidence="4">
    <location>
        <begin position="364"/>
        <end position="384"/>
    </location>
</feature>
<feature type="transmembrane region" description="Helical" evidence="4">
    <location>
        <begin position="395"/>
        <end position="415"/>
    </location>
</feature>
<feature type="domain" description="PTS EIIC type-1" evidence="4">
    <location>
        <begin position="3"/>
        <end position="427"/>
    </location>
</feature>
<feature type="domain" description="PTS EIIB type-1" evidence="3">
    <location>
        <begin position="438"/>
        <end position="519"/>
    </location>
</feature>
<feature type="domain" description="PTS EIIA type-1" evidence="2">
    <location>
        <begin position="560"/>
        <end position="664"/>
    </location>
</feature>
<feature type="active site" description="Phosphocysteine intermediate; for EIIB activity" evidence="3">
    <location>
        <position position="460"/>
    </location>
</feature>
<feature type="active site" description="Tele-phosphohistidine intermediate; for EIIA activity" evidence="2">
    <location>
        <position position="612"/>
    </location>
</feature>
<sequence length="688" mass="74430">MFKKLFGQLQRIGKALMLPVAILPAAGILLAFGNAMHNEQLVEIAPWLKNDIIVMISSVMEAAGQVVFDNLPLLFAVGTALGLAGGDGVAALAALVGYLIMNATMGKVLHITIDDIFSYAKGAKELSQAAKEPAHALVLGIPTLQTGVFGGIIMGALAAWCYNKFYNITLPPFLGFFAGKRFVPIVTSVVAIATGVLLSFAWPPIQDGLNSLSNFLLNKNLTLTTFIFGIIERSLIPFGLHHIFYSPFWFEFGSYTNHAGELVRGDQRIWMAQLKDGVPFTAGAFTTGKYPFMMFGLPAAAFAIYKNARPERKKVVGGLMLSAGLTAFLTGITEPLEFSFLFVAPVLYGIHVLLAGTSFLVMHLLGVKIGMTFSGGFIDYILYGLLNWDRSHALLVIPVGIVYAIVYYFLFDFAIRKFKLKTPGREDEETEIRNSSVAKLPFDVLDAMGGKENIKHLDACITRLRVEVVDKSKVDVAGIKALGASGVLEVGNNMQAIFGPKSDQIKHDMAKIMSGEITKPSETTVTEEMSDEPVHVEALGTTDIYAPGVGQIIPLSEVPDQVFAGKMMGDGIGFIPEKGEIVAPFDGTVKTIFPTKHAIGLESESGVEVLIHIGIDTVKLNGEGFESLINVDEKVTQAQPLMKVNLAYLKAHAPSIVTPMIITNLENKELVIEDVQDADPGKLIMTVK</sequence>
<keyword id="KW-1003">Cell membrane</keyword>
<keyword id="KW-0418">Kinase</keyword>
<keyword id="KW-0472">Membrane</keyword>
<keyword id="KW-0598">Phosphotransferase system</keyword>
<keyword id="KW-0762">Sugar transport</keyword>
<keyword id="KW-0808">Transferase</keyword>
<keyword id="KW-0812">Transmembrane</keyword>
<keyword id="KW-1133">Transmembrane helix</keyword>
<keyword id="KW-0813">Transport</keyword>
<protein>
    <recommendedName>
        <fullName>PTS system glucoside-specific EIICBA component</fullName>
    </recommendedName>
    <domain>
        <recommendedName>
            <fullName>Glucoside permease IIC component</fullName>
        </recommendedName>
        <alternativeName>
            <fullName>PTS system glucoside-specific EIIC component</fullName>
        </alternativeName>
    </domain>
    <domain>
        <recommendedName>
            <fullName>Glucoside-specific phosphotransferase enzyme IIB component</fullName>
            <ecNumber>2.7.1.-</ecNumber>
        </recommendedName>
        <alternativeName>
            <fullName>PTS system glucoside-specific EIIB component</fullName>
        </alternativeName>
    </domain>
    <domain>
        <recommendedName>
            <fullName>Glucoside-specific phosphotransferase enzyme IIA component</fullName>
        </recommendedName>
        <alternativeName>
            <fullName>PTS system glucoside-specific EIIA component</fullName>
        </alternativeName>
    </domain>
</protein>